<evidence type="ECO:0000250" key="1"/>
<evidence type="ECO:0000255" key="2"/>
<evidence type="ECO:0000305" key="3"/>
<reference key="1">
    <citation type="journal article" date="2005" name="Science">
        <title>The transcriptional landscape of the mammalian genome.</title>
        <authorList>
            <person name="Carninci P."/>
            <person name="Kasukawa T."/>
            <person name="Katayama S."/>
            <person name="Gough J."/>
            <person name="Frith M.C."/>
            <person name="Maeda N."/>
            <person name="Oyama R."/>
            <person name="Ravasi T."/>
            <person name="Lenhard B."/>
            <person name="Wells C."/>
            <person name="Kodzius R."/>
            <person name="Shimokawa K."/>
            <person name="Bajic V.B."/>
            <person name="Brenner S.E."/>
            <person name="Batalov S."/>
            <person name="Forrest A.R."/>
            <person name="Zavolan M."/>
            <person name="Davis M.J."/>
            <person name="Wilming L.G."/>
            <person name="Aidinis V."/>
            <person name="Allen J.E."/>
            <person name="Ambesi-Impiombato A."/>
            <person name="Apweiler R."/>
            <person name="Aturaliya R.N."/>
            <person name="Bailey T.L."/>
            <person name="Bansal M."/>
            <person name="Baxter L."/>
            <person name="Beisel K.W."/>
            <person name="Bersano T."/>
            <person name="Bono H."/>
            <person name="Chalk A.M."/>
            <person name="Chiu K.P."/>
            <person name="Choudhary V."/>
            <person name="Christoffels A."/>
            <person name="Clutterbuck D.R."/>
            <person name="Crowe M.L."/>
            <person name="Dalla E."/>
            <person name="Dalrymple B.P."/>
            <person name="de Bono B."/>
            <person name="Della Gatta G."/>
            <person name="di Bernardo D."/>
            <person name="Down T."/>
            <person name="Engstrom P."/>
            <person name="Fagiolini M."/>
            <person name="Faulkner G."/>
            <person name="Fletcher C.F."/>
            <person name="Fukushima T."/>
            <person name="Furuno M."/>
            <person name="Futaki S."/>
            <person name="Gariboldi M."/>
            <person name="Georgii-Hemming P."/>
            <person name="Gingeras T.R."/>
            <person name="Gojobori T."/>
            <person name="Green R.E."/>
            <person name="Gustincich S."/>
            <person name="Harbers M."/>
            <person name="Hayashi Y."/>
            <person name="Hensch T.K."/>
            <person name="Hirokawa N."/>
            <person name="Hill D."/>
            <person name="Huminiecki L."/>
            <person name="Iacono M."/>
            <person name="Ikeo K."/>
            <person name="Iwama A."/>
            <person name="Ishikawa T."/>
            <person name="Jakt M."/>
            <person name="Kanapin A."/>
            <person name="Katoh M."/>
            <person name="Kawasawa Y."/>
            <person name="Kelso J."/>
            <person name="Kitamura H."/>
            <person name="Kitano H."/>
            <person name="Kollias G."/>
            <person name="Krishnan S.P."/>
            <person name="Kruger A."/>
            <person name="Kummerfeld S.K."/>
            <person name="Kurochkin I.V."/>
            <person name="Lareau L.F."/>
            <person name="Lazarevic D."/>
            <person name="Lipovich L."/>
            <person name="Liu J."/>
            <person name="Liuni S."/>
            <person name="McWilliam S."/>
            <person name="Madan Babu M."/>
            <person name="Madera M."/>
            <person name="Marchionni L."/>
            <person name="Matsuda H."/>
            <person name="Matsuzawa S."/>
            <person name="Miki H."/>
            <person name="Mignone F."/>
            <person name="Miyake S."/>
            <person name="Morris K."/>
            <person name="Mottagui-Tabar S."/>
            <person name="Mulder N."/>
            <person name="Nakano N."/>
            <person name="Nakauchi H."/>
            <person name="Ng P."/>
            <person name="Nilsson R."/>
            <person name="Nishiguchi S."/>
            <person name="Nishikawa S."/>
            <person name="Nori F."/>
            <person name="Ohara O."/>
            <person name="Okazaki Y."/>
            <person name="Orlando V."/>
            <person name="Pang K.C."/>
            <person name="Pavan W.J."/>
            <person name="Pavesi G."/>
            <person name="Pesole G."/>
            <person name="Petrovsky N."/>
            <person name="Piazza S."/>
            <person name="Reed J."/>
            <person name="Reid J.F."/>
            <person name="Ring B.Z."/>
            <person name="Ringwald M."/>
            <person name="Rost B."/>
            <person name="Ruan Y."/>
            <person name="Salzberg S.L."/>
            <person name="Sandelin A."/>
            <person name="Schneider C."/>
            <person name="Schoenbach C."/>
            <person name="Sekiguchi K."/>
            <person name="Semple C.A."/>
            <person name="Seno S."/>
            <person name="Sessa L."/>
            <person name="Sheng Y."/>
            <person name="Shibata Y."/>
            <person name="Shimada H."/>
            <person name="Shimada K."/>
            <person name="Silva D."/>
            <person name="Sinclair B."/>
            <person name="Sperling S."/>
            <person name="Stupka E."/>
            <person name="Sugiura K."/>
            <person name="Sultana R."/>
            <person name="Takenaka Y."/>
            <person name="Taki K."/>
            <person name="Tammoja K."/>
            <person name="Tan S.L."/>
            <person name="Tang S."/>
            <person name="Taylor M.S."/>
            <person name="Tegner J."/>
            <person name="Teichmann S.A."/>
            <person name="Ueda H.R."/>
            <person name="van Nimwegen E."/>
            <person name="Verardo R."/>
            <person name="Wei C.L."/>
            <person name="Yagi K."/>
            <person name="Yamanishi H."/>
            <person name="Zabarovsky E."/>
            <person name="Zhu S."/>
            <person name="Zimmer A."/>
            <person name="Hide W."/>
            <person name="Bult C."/>
            <person name="Grimmond S.M."/>
            <person name="Teasdale R.D."/>
            <person name="Liu E.T."/>
            <person name="Brusic V."/>
            <person name="Quackenbush J."/>
            <person name="Wahlestedt C."/>
            <person name="Mattick J.S."/>
            <person name="Hume D.A."/>
            <person name="Kai C."/>
            <person name="Sasaki D."/>
            <person name="Tomaru Y."/>
            <person name="Fukuda S."/>
            <person name="Kanamori-Katayama M."/>
            <person name="Suzuki M."/>
            <person name="Aoki J."/>
            <person name="Arakawa T."/>
            <person name="Iida J."/>
            <person name="Imamura K."/>
            <person name="Itoh M."/>
            <person name="Kato T."/>
            <person name="Kawaji H."/>
            <person name="Kawagashira N."/>
            <person name="Kawashima T."/>
            <person name="Kojima M."/>
            <person name="Kondo S."/>
            <person name="Konno H."/>
            <person name="Nakano K."/>
            <person name="Ninomiya N."/>
            <person name="Nishio T."/>
            <person name="Okada M."/>
            <person name="Plessy C."/>
            <person name="Shibata K."/>
            <person name="Shiraki T."/>
            <person name="Suzuki S."/>
            <person name="Tagami M."/>
            <person name="Waki K."/>
            <person name="Watahiki A."/>
            <person name="Okamura-Oho Y."/>
            <person name="Suzuki H."/>
            <person name="Kawai J."/>
            <person name="Hayashizaki Y."/>
        </authorList>
    </citation>
    <scope>NUCLEOTIDE SEQUENCE [LARGE SCALE MRNA]</scope>
    <source>
        <strain>C57BL/6J</strain>
        <tissue>Hypothalamus</tissue>
    </source>
</reference>
<reference key="2">
    <citation type="journal article" date="2004" name="Genome Res.">
        <title>The status, quality, and expansion of the NIH full-length cDNA project: the Mammalian Gene Collection (MGC).</title>
        <authorList>
            <consortium name="The MGC Project Team"/>
        </authorList>
    </citation>
    <scope>NUCLEOTIDE SEQUENCE [LARGE SCALE MRNA]</scope>
</reference>
<comment type="function">
    <text evidence="1">Cell surface proteoglycan that bears heparan sulfate.</text>
</comment>
<comment type="subcellular location">
    <subcellularLocation>
        <location evidence="1">Cell membrane</location>
        <topology evidence="1">Lipid-anchor</topology>
        <topology evidence="1">GPI-anchor</topology>
        <orientation evidence="1">Extracellular side</orientation>
    </subcellularLocation>
</comment>
<comment type="subcellular location">
    <molecule>Secreted glypican-5</molecule>
    <subcellularLocation>
        <location evidence="1">Secreted</location>
        <location evidence="1">Extracellular space</location>
    </subcellularLocation>
</comment>
<comment type="similarity">
    <text evidence="3">Belongs to the glypican family.</text>
</comment>
<proteinExistence type="evidence at transcript level"/>
<organism>
    <name type="scientific">Mus musculus</name>
    <name type="common">Mouse</name>
    <dbReference type="NCBI Taxonomy" id="10090"/>
    <lineage>
        <taxon>Eukaryota</taxon>
        <taxon>Metazoa</taxon>
        <taxon>Chordata</taxon>
        <taxon>Craniata</taxon>
        <taxon>Vertebrata</taxon>
        <taxon>Euteleostomi</taxon>
        <taxon>Mammalia</taxon>
        <taxon>Eutheria</taxon>
        <taxon>Euarchontoglires</taxon>
        <taxon>Glires</taxon>
        <taxon>Rodentia</taxon>
        <taxon>Myomorpha</taxon>
        <taxon>Muroidea</taxon>
        <taxon>Muridae</taxon>
        <taxon>Murinae</taxon>
        <taxon>Mus</taxon>
        <taxon>Mus</taxon>
    </lineage>
</organism>
<protein>
    <recommendedName>
        <fullName>Glypican-5</fullName>
    </recommendedName>
    <component>
        <recommendedName>
            <fullName>Secreted glypican-5</fullName>
        </recommendedName>
    </component>
</protein>
<accession>Q8CAL5</accession>
<accession>Q14BN1</accession>
<gene>
    <name type="primary">Gpc5</name>
</gene>
<name>GPC5_MOUSE</name>
<keyword id="KW-1003">Cell membrane</keyword>
<keyword id="KW-0325">Glycoprotein</keyword>
<keyword id="KW-0336">GPI-anchor</keyword>
<keyword id="KW-0357">Heparan sulfate</keyword>
<keyword id="KW-0449">Lipoprotein</keyword>
<keyword id="KW-0472">Membrane</keyword>
<keyword id="KW-0654">Proteoglycan</keyword>
<keyword id="KW-1185">Reference proteome</keyword>
<keyword id="KW-0964">Secreted</keyword>
<keyword id="KW-0732">Signal</keyword>
<sequence>MDARTWRLGWRCLLLLALLGSTRSEGVESCEEVRKLFQWRLGGAVKGLPEAPRAGPDLQVCLSKNPTCCTRKMEERYQIAARQDLQQVLQTSSSTLKLLISRNAAAFQETLETLIRQAENYTSILFCNTYRNMALEAAASIQEFFTDVGLYLFGADVNPEEFVNRFFDSLFPLVYNHLINPGVTDSSLQYSECIRMARQDVSPFGNIPKRVMGQMGRSLLPGRTFLQALNLGIEVINTTDHIHFSKECSRALLKMQYCPHCQSLMLSKPCMGYCLNVIRGCLAHMTELNPHWHAYIRSLEELSDAMHGTYDVEHVLLNFHLLVNDAVLQAHLNGQKLLDQVNTICGHPVRTPTQSPRCTFDPSKEKHGMKISARNGEETLANRRKEFINSLRLHGSFYGGLADQLCVNELAAPEGRPCWNGEEIVKSYAQRVVGNGIKAQSANPEVRVRGTDPVVNQIIDKLKHVIQLLRGRSPKPNKWELLQPGSGGGMLENSSGDCDDEDGCGGSGSGEVKRTLKITNWMPDSMNFSDVKQVHRADHGSTLDTTSTGCASGTESMALPLMGTLMFLPWLW</sequence>
<dbReference type="EMBL" id="AK038547">
    <property type="protein sequence ID" value="BAC30037.1"/>
    <property type="molecule type" value="mRNA"/>
</dbReference>
<dbReference type="EMBL" id="BC115712">
    <property type="protein sequence ID" value="AAI15713.1"/>
    <property type="molecule type" value="mRNA"/>
</dbReference>
<dbReference type="CCDS" id="CCDS27329.1"/>
<dbReference type="RefSeq" id="NP_780709.1">
    <property type="nucleotide sequence ID" value="NM_175500.4"/>
</dbReference>
<dbReference type="SMR" id="Q8CAL5"/>
<dbReference type="BioGRID" id="222253">
    <property type="interactions" value="1"/>
</dbReference>
<dbReference type="FunCoup" id="Q8CAL5">
    <property type="interactions" value="492"/>
</dbReference>
<dbReference type="STRING" id="10090.ENSMUSP00000022707"/>
<dbReference type="GlyCosmos" id="Q8CAL5">
    <property type="glycosylation" value="8 sites, No reported glycans"/>
</dbReference>
<dbReference type="GlyGen" id="Q8CAL5">
    <property type="glycosylation" value="8 sites, 1 N-linked glycan (1 site)"/>
</dbReference>
<dbReference type="iPTMnet" id="Q8CAL5"/>
<dbReference type="PhosphoSitePlus" id="Q8CAL5"/>
<dbReference type="PaxDb" id="10090-ENSMUSP00000135085"/>
<dbReference type="ProteomicsDB" id="271035"/>
<dbReference type="Antibodypedia" id="24761">
    <property type="antibodies" value="267 antibodies from 33 providers"/>
</dbReference>
<dbReference type="DNASU" id="103978"/>
<dbReference type="Ensembl" id="ENSMUST00000022707.7">
    <property type="protein sequence ID" value="ENSMUSP00000022707.7"/>
    <property type="gene ID" value="ENSMUSG00000022112.15"/>
</dbReference>
<dbReference type="GeneID" id="103978"/>
<dbReference type="KEGG" id="mmu:103978"/>
<dbReference type="UCSC" id="uc007uyi.2">
    <property type="organism name" value="mouse"/>
</dbReference>
<dbReference type="AGR" id="MGI:1194894"/>
<dbReference type="CTD" id="2262"/>
<dbReference type="MGI" id="MGI:1194894">
    <property type="gene designation" value="Gpc5"/>
</dbReference>
<dbReference type="VEuPathDB" id="HostDB:ENSMUSG00000022112"/>
<dbReference type="eggNOG" id="KOG3821">
    <property type="taxonomic scope" value="Eukaryota"/>
</dbReference>
<dbReference type="GeneTree" id="ENSGT01050000244955"/>
<dbReference type="HOGENOM" id="CLU_024658_4_1_1"/>
<dbReference type="InParanoid" id="Q8CAL5"/>
<dbReference type="OMA" id="RGCSAQY"/>
<dbReference type="PhylomeDB" id="Q8CAL5"/>
<dbReference type="Reactome" id="R-MMU-1971475">
    <property type="pathway name" value="A tetrasaccharide linker sequence is required for GAG synthesis"/>
</dbReference>
<dbReference type="Reactome" id="R-MMU-2022928">
    <property type="pathway name" value="HS-GAG biosynthesis"/>
</dbReference>
<dbReference type="Reactome" id="R-MMU-2024096">
    <property type="pathway name" value="HS-GAG degradation"/>
</dbReference>
<dbReference type="Reactome" id="R-MMU-5362798">
    <property type="pathway name" value="Release of Hh-Np from the secreting cell"/>
</dbReference>
<dbReference type="Reactome" id="R-MMU-975634">
    <property type="pathway name" value="Retinoid metabolism and transport"/>
</dbReference>
<dbReference type="BioGRID-ORCS" id="103978">
    <property type="hits" value="3 hits in 78 CRISPR screens"/>
</dbReference>
<dbReference type="ChiTaRS" id="Gpc5">
    <property type="organism name" value="mouse"/>
</dbReference>
<dbReference type="PRO" id="PR:Q8CAL5"/>
<dbReference type="Proteomes" id="UP000000589">
    <property type="component" value="Chromosome 14"/>
</dbReference>
<dbReference type="RNAct" id="Q8CAL5">
    <property type="molecule type" value="protein"/>
</dbReference>
<dbReference type="Bgee" id="ENSMUSG00000022112">
    <property type="expression patterns" value="Expressed in substantia nigra and 94 other cell types or tissues"/>
</dbReference>
<dbReference type="ExpressionAtlas" id="Q8CAL5">
    <property type="expression patterns" value="baseline and differential"/>
</dbReference>
<dbReference type="GO" id="GO:0005576">
    <property type="term" value="C:extracellular region"/>
    <property type="evidence" value="ECO:0007669"/>
    <property type="project" value="UniProtKB-SubCell"/>
</dbReference>
<dbReference type="GO" id="GO:0005796">
    <property type="term" value="C:Golgi lumen"/>
    <property type="evidence" value="ECO:0000304"/>
    <property type="project" value="Reactome"/>
</dbReference>
<dbReference type="GO" id="GO:0005886">
    <property type="term" value="C:plasma membrane"/>
    <property type="evidence" value="ECO:0000250"/>
    <property type="project" value="MGI"/>
</dbReference>
<dbReference type="GO" id="GO:0098552">
    <property type="term" value="C:side of membrane"/>
    <property type="evidence" value="ECO:0007669"/>
    <property type="project" value="UniProtKB-KW"/>
</dbReference>
<dbReference type="GO" id="GO:0009966">
    <property type="term" value="P:regulation of signal transduction"/>
    <property type="evidence" value="ECO:0007669"/>
    <property type="project" value="InterPro"/>
</dbReference>
<dbReference type="InterPro" id="IPR001863">
    <property type="entry name" value="Glypican"/>
</dbReference>
<dbReference type="InterPro" id="IPR019803">
    <property type="entry name" value="Glypican_CS"/>
</dbReference>
<dbReference type="PANTHER" id="PTHR10822">
    <property type="entry name" value="GLYPICAN"/>
    <property type="match status" value="1"/>
</dbReference>
<dbReference type="PANTHER" id="PTHR10822:SF12">
    <property type="entry name" value="GLYPICAN-5"/>
    <property type="match status" value="1"/>
</dbReference>
<dbReference type="Pfam" id="PF01153">
    <property type="entry name" value="Glypican"/>
    <property type="match status" value="1"/>
</dbReference>
<dbReference type="PROSITE" id="PS01207">
    <property type="entry name" value="GLYPICAN"/>
    <property type="match status" value="1"/>
</dbReference>
<feature type="signal peptide" evidence="2">
    <location>
        <begin position="1"/>
        <end position="24"/>
    </location>
</feature>
<feature type="chain" id="PRO_0000012321" description="Glypican-5">
    <location>
        <begin position="25"/>
        <end status="unknown"/>
    </location>
</feature>
<feature type="chain" id="PRO_0000333850" description="Secreted glypican-5">
    <location>
        <begin position="25"/>
        <end status="unknown"/>
    </location>
</feature>
<feature type="propeptide" id="PRO_0000012322" description="Removed in mature form" evidence="2">
    <location>
        <begin status="unknown"/>
        <end position="572"/>
    </location>
</feature>
<feature type="glycosylation site" description="N-linked (GlcNAc...) asparagine" evidence="2">
    <location>
        <position position="120"/>
    </location>
</feature>
<feature type="glycosylation site" description="N-linked (GlcNAc...) asparagine" evidence="2">
    <location>
        <position position="237"/>
    </location>
</feature>
<feature type="glycosylation site" description="O-linked (Xyl...) (glycosaminoglycan) serine" evidence="2">
    <location>
        <position position="486"/>
    </location>
</feature>
<feature type="glycosylation site" description="N-linked (GlcNAc...) asparagine" evidence="2">
    <location>
        <position position="493"/>
    </location>
</feature>
<feature type="glycosylation site" description="O-linked (Xyl...) (glycosaminoglycan) serine" evidence="2">
    <location>
        <position position="495"/>
    </location>
</feature>
<feature type="glycosylation site" description="O-linked (Xyl...) (glycosaminoglycan) serine" evidence="2">
    <location>
        <position position="507"/>
    </location>
</feature>
<feature type="glycosylation site" description="O-linked (Xyl...) (glycosaminoglycan) serine" evidence="2">
    <location>
        <position position="509"/>
    </location>
</feature>
<feature type="glycosylation site" description="N-linked (GlcNAc...) asparagine" evidence="2">
    <location>
        <position position="527"/>
    </location>
</feature>